<sequence>MVKSHIGSWILVLFVAMWSDVGLCKKRPKPGGGWNTGGSRYPGQGSPGGNRYPPQGGGGWGQPHGGGWGQPHGGGWGQPHGGGWGQPHGGGGWGQGGTHSQWNKPSKPKTNMKHVAGAAAAGAVVGGLGGYMLGSAMNRPLIHFGNDYEDRYYRENMYRYPNQVYYRPVDQYNNQNTFVHDCVNITVKQHTVTTTTKGENFTETDIKMMERVVEQMCITQYQRESQAYYQRGASVILFSSPPVILLISFLIFLIVG</sequence>
<comment type="function">
    <text evidence="2 4">Its primary physiological function is unclear. Has cytoprotective activity against internal or environmental stresses. May play a role in neuronal development and synaptic plasticity. May be required for neuronal myelin sheath maintenance. May play a role in iron uptake and iron homeostasis. Soluble oligomers are toxic to cultured neuroblastoma cells and induce apoptosis (in vitro). Association with GPC1 (via its heparan sulfate chains) targets PRNP to lipid rafts. Also provides Cu(2+) or Zn(2+) for the ascorbate-mediated GPC1 deaminase degradation of its heparan sulfate side chains (By similarity).</text>
</comment>
<comment type="subunit">
    <text evidence="2 4">Monomer and homodimer. Has a tendency to aggregate into amyloid fibrils containing a cross-beta spine, formed by a steric zipper of superposed beta-strands. Soluble oligomers may represent an intermediate stage on the path to fibril formation. Copper binding may promote oligomerization. Interacts with GRB2, APP, ERI3/PRNPIP and SYN1. Mislocalized cytosolically exposed PrP interacts with MGRN1; this interaction alters MGRN1 subcellular location and causes lysosomal enlargement. Interacts with KIAA1191.</text>
</comment>
<comment type="subcellular location">
    <subcellularLocation>
        <location evidence="2">Cell membrane</location>
        <topology evidence="2">Lipid-anchor</topology>
        <topology evidence="2">GPI-anchor</topology>
    </subcellularLocation>
    <subcellularLocation>
        <location evidence="4">Golgi apparatus</location>
    </subcellularLocation>
    <text evidence="2">Targeted to lipid rafts via association with the heparan sulfate chains of GPC1. Colocates, in the presence of Cu(2+), to vesicles in para- and perinuclear regions, where both proteins undergo internalization. Heparin displaces PRNP from lipid rafts and promotes endocytosis.</text>
</comment>
<comment type="domain">
    <text evidence="2">The normal, monomeric form has a mainly alpha-helical structure. The disease-associated, protease-resistant form forms amyloid fibrils containing a cross-beta spine, formed by a steric zipper of superposed beta-strands. Disease mutations may favor intermolecular contacts via short beta strands, and may thereby trigger oligomerization.</text>
</comment>
<comment type="domain">
    <text evidence="2">Contains an N-terminal region composed of octamer repeats. At low copper concentrations, the sidechains of His residues from three or four repeats contribute to the binding of a single copper ion. Alternatively, a copper ion can be bound by interaction with the sidechain and backbone amide nitrogen of a single His residue. The observed copper binding stoichiometry suggests that two repeat regions cooperate to stabilize the binding of a single copper ion. At higher copper concentrations, each octamer can bind one copper ion by interactions with the His sidechain and Gly backbone atoms. A mixture of binding types may occur, especially in the case of octamer repeat expansion. Copper binding may stabilize the conformation of this region and may promote oligomerization.</text>
</comment>
<comment type="disease">
    <text evidence="7">Found in high quantity in the brain of animals infected with the degenerative neurological disease known as chronic wasting disease (CWD).</text>
</comment>
<comment type="similarity">
    <text evidence="7">Belongs to the prion family.</text>
</comment>
<protein>
    <recommendedName>
        <fullName>Major prion protein</fullName>
        <shortName>PrP</shortName>
    </recommendedName>
    <cdAntigenName>CD230</cdAntigenName>
</protein>
<keyword id="KW-0002">3D-structure</keyword>
<keyword id="KW-0034">Amyloid</keyword>
<keyword id="KW-1003">Cell membrane</keyword>
<keyword id="KW-0186">Copper</keyword>
<keyword id="KW-1015">Disulfide bond</keyword>
<keyword id="KW-0325">Glycoprotein</keyword>
<keyword id="KW-0333">Golgi apparatus</keyword>
<keyword id="KW-0336">GPI-anchor</keyword>
<keyword id="KW-0449">Lipoprotein</keyword>
<keyword id="KW-0472">Membrane</keyword>
<keyword id="KW-0479">Metal-binding</keyword>
<keyword id="KW-0640">Prion</keyword>
<keyword id="KW-0677">Repeat</keyword>
<keyword id="KW-0732">Signal</keyword>
<keyword id="KW-0862">Zinc</keyword>
<name>PRIO_ODOHE</name>
<proteinExistence type="evidence at protein level"/>
<dbReference type="EMBL" id="U25965">
    <property type="protein sequence ID" value="AAA68941.1"/>
    <property type="molecule type" value="Genomic_DNA"/>
</dbReference>
<dbReference type="PDB" id="4YXH">
    <property type="method" value="X-ray"/>
    <property type="resolution" value="2.70 A"/>
    <property type="chains" value="A=124-231"/>
</dbReference>
<dbReference type="PDB" id="6FNV">
    <property type="method" value="NMR"/>
    <property type="chains" value="A=94-233"/>
</dbReference>
<dbReference type="PDBsum" id="4YXH"/>
<dbReference type="PDBsum" id="6FNV"/>
<dbReference type="BMRB" id="P47852"/>
<dbReference type="SMR" id="P47852"/>
<dbReference type="GlyCosmos" id="P47852">
    <property type="glycosylation" value="2 sites, No reported glycans"/>
</dbReference>
<dbReference type="EvolutionaryTrace" id="P47852"/>
<dbReference type="GO" id="GO:0005794">
    <property type="term" value="C:Golgi apparatus"/>
    <property type="evidence" value="ECO:0007669"/>
    <property type="project" value="UniProtKB-SubCell"/>
</dbReference>
<dbReference type="GO" id="GO:0005886">
    <property type="term" value="C:plasma membrane"/>
    <property type="evidence" value="ECO:0007669"/>
    <property type="project" value="UniProtKB-SubCell"/>
</dbReference>
<dbReference type="GO" id="GO:0098552">
    <property type="term" value="C:side of membrane"/>
    <property type="evidence" value="ECO:0007669"/>
    <property type="project" value="UniProtKB-KW"/>
</dbReference>
<dbReference type="GO" id="GO:0005507">
    <property type="term" value="F:copper ion binding"/>
    <property type="evidence" value="ECO:0000250"/>
    <property type="project" value="UniProtKB"/>
</dbReference>
<dbReference type="GO" id="GO:0051260">
    <property type="term" value="P:protein homooligomerization"/>
    <property type="evidence" value="ECO:0007669"/>
    <property type="project" value="InterPro"/>
</dbReference>
<dbReference type="FunFam" id="1.10.790.10:FF:000001">
    <property type="entry name" value="Major prion protein"/>
    <property type="match status" value="1"/>
</dbReference>
<dbReference type="Gene3D" id="1.10.790.10">
    <property type="entry name" value="Prion/Doppel protein, beta-ribbon domain"/>
    <property type="match status" value="1"/>
</dbReference>
<dbReference type="InterPro" id="IPR000817">
    <property type="entry name" value="Prion"/>
</dbReference>
<dbReference type="InterPro" id="IPR036924">
    <property type="entry name" value="Prion/Doppel_b-ribbon_dom_sf"/>
</dbReference>
<dbReference type="InterPro" id="IPR022416">
    <property type="entry name" value="Prion/Doppel_prot_b-ribbon_dom"/>
</dbReference>
<dbReference type="InterPro" id="IPR020949">
    <property type="entry name" value="Prion_copper_b_octapeptide"/>
</dbReference>
<dbReference type="InterPro" id="IPR025860">
    <property type="entry name" value="Prion_N"/>
</dbReference>
<dbReference type="PANTHER" id="PTHR15506">
    <property type="entry name" value="DOPPEL PRION"/>
    <property type="match status" value="1"/>
</dbReference>
<dbReference type="PANTHER" id="PTHR15506:SF2">
    <property type="entry name" value="MAJOR PRION PROTEIN"/>
    <property type="match status" value="1"/>
</dbReference>
<dbReference type="Pfam" id="PF00377">
    <property type="entry name" value="Prion"/>
    <property type="match status" value="1"/>
</dbReference>
<dbReference type="Pfam" id="PF11587">
    <property type="entry name" value="Prion_bPrPp"/>
    <property type="match status" value="1"/>
</dbReference>
<dbReference type="Pfam" id="PF03991">
    <property type="entry name" value="Prion_octapep"/>
    <property type="match status" value="1"/>
</dbReference>
<dbReference type="PRINTS" id="PR00341">
    <property type="entry name" value="PRION"/>
</dbReference>
<dbReference type="SMART" id="SM00157">
    <property type="entry name" value="PRP"/>
    <property type="match status" value="1"/>
</dbReference>
<dbReference type="SUPFAM" id="SSF54098">
    <property type="entry name" value="Prion-like"/>
    <property type="match status" value="1"/>
</dbReference>
<dbReference type="PROSITE" id="PS00291">
    <property type="entry name" value="PRION_1"/>
    <property type="match status" value="1"/>
</dbReference>
<dbReference type="PROSITE" id="PS00706">
    <property type="entry name" value="PRION_2"/>
    <property type="match status" value="1"/>
</dbReference>
<organism>
    <name type="scientific">Odocoileus hemionus</name>
    <name type="common">Mule deer</name>
    <name type="synonym">Cervus hemionus</name>
    <dbReference type="NCBI Taxonomy" id="9872"/>
    <lineage>
        <taxon>Eukaryota</taxon>
        <taxon>Metazoa</taxon>
        <taxon>Chordata</taxon>
        <taxon>Craniata</taxon>
        <taxon>Vertebrata</taxon>
        <taxon>Euteleostomi</taxon>
        <taxon>Mammalia</taxon>
        <taxon>Eutheria</taxon>
        <taxon>Laurasiatheria</taxon>
        <taxon>Artiodactyla</taxon>
        <taxon>Ruminantia</taxon>
        <taxon>Pecora</taxon>
        <taxon>Cervidae</taxon>
        <taxon>Odocoileinae</taxon>
        <taxon>Odocoileus</taxon>
    </lineage>
</organism>
<feature type="signal peptide" evidence="1">
    <location>
        <begin position="1"/>
        <end position="24"/>
    </location>
</feature>
<feature type="chain" id="PRO_0000025703" description="Major prion protein">
    <location>
        <begin position="25"/>
        <end position="233"/>
    </location>
</feature>
<feature type="propeptide" id="PRO_0000025704" description="Removed in mature form" evidence="5">
    <location>
        <begin position="234"/>
        <end position="256"/>
    </location>
</feature>
<feature type="repeat" description="1">
    <location>
        <begin position="54"/>
        <end position="62"/>
    </location>
</feature>
<feature type="repeat" description="2">
    <location>
        <begin position="63"/>
        <end position="70"/>
    </location>
</feature>
<feature type="repeat" description="3">
    <location>
        <begin position="71"/>
        <end position="78"/>
    </location>
</feature>
<feature type="repeat" description="4">
    <location>
        <begin position="79"/>
        <end position="86"/>
    </location>
</feature>
<feature type="repeat" description="5">
    <location>
        <begin position="87"/>
        <end position="95"/>
    </location>
</feature>
<feature type="region of interest" description="Interaction with GRB2, ERI3 and SYN1" evidence="4">
    <location>
        <begin position="25"/>
        <end position="233"/>
    </location>
</feature>
<feature type="region of interest" description="Disordered" evidence="6">
    <location>
        <begin position="28"/>
        <end position="110"/>
    </location>
</feature>
<feature type="region of interest" description="5 X 8 AA tandem repeats of P-H-G-G-G-W-G-Q">
    <location>
        <begin position="54"/>
        <end position="95"/>
    </location>
</feature>
<feature type="compositionally biased region" description="Gly residues" evidence="6">
    <location>
        <begin position="55"/>
        <end position="97"/>
    </location>
</feature>
<feature type="binding site" evidence="2">
    <location>
        <position position="64"/>
    </location>
    <ligand>
        <name>Cu(2+)</name>
        <dbReference type="ChEBI" id="CHEBI:29036"/>
        <label>1</label>
    </ligand>
</feature>
<feature type="binding site" evidence="2">
    <location>
        <position position="65"/>
    </location>
    <ligand>
        <name>Cu(2+)</name>
        <dbReference type="ChEBI" id="CHEBI:29036"/>
        <label>1</label>
    </ligand>
</feature>
<feature type="binding site" evidence="2">
    <location>
        <position position="66"/>
    </location>
    <ligand>
        <name>Cu(2+)</name>
        <dbReference type="ChEBI" id="CHEBI:29036"/>
        <label>1</label>
    </ligand>
</feature>
<feature type="binding site" evidence="2">
    <location>
        <position position="72"/>
    </location>
    <ligand>
        <name>Cu(2+)</name>
        <dbReference type="ChEBI" id="CHEBI:29036"/>
        <label>2</label>
    </ligand>
</feature>
<feature type="binding site" evidence="2">
    <location>
        <position position="73"/>
    </location>
    <ligand>
        <name>Cu(2+)</name>
        <dbReference type="ChEBI" id="CHEBI:29036"/>
        <label>2</label>
    </ligand>
</feature>
<feature type="binding site" evidence="2">
    <location>
        <position position="74"/>
    </location>
    <ligand>
        <name>Cu(2+)</name>
        <dbReference type="ChEBI" id="CHEBI:29036"/>
        <label>2</label>
    </ligand>
</feature>
<feature type="binding site" evidence="2">
    <location>
        <position position="80"/>
    </location>
    <ligand>
        <name>Cu(2+)</name>
        <dbReference type="ChEBI" id="CHEBI:29036"/>
        <label>3</label>
    </ligand>
</feature>
<feature type="binding site" evidence="2">
    <location>
        <position position="81"/>
    </location>
    <ligand>
        <name>Cu(2+)</name>
        <dbReference type="ChEBI" id="CHEBI:29036"/>
        <label>3</label>
    </ligand>
</feature>
<feature type="binding site" evidence="2">
    <location>
        <position position="82"/>
    </location>
    <ligand>
        <name>Cu(2+)</name>
        <dbReference type="ChEBI" id="CHEBI:29036"/>
        <label>3</label>
    </ligand>
</feature>
<feature type="binding site" evidence="2">
    <location>
        <position position="88"/>
    </location>
    <ligand>
        <name>Cu(2+)</name>
        <dbReference type="ChEBI" id="CHEBI:29036"/>
        <label>4</label>
    </ligand>
</feature>
<feature type="binding site" evidence="2">
    <location>
        <position position="90"/>
    </location>
    <ligand>
        <name>Cu(2+)</name>
        <dbReference type="ChEBI" id="CHEBI:29036"/>
        <label>4</label>
    </ligand>
</feature>
<feature type="binding site" evidence="2">
    <location>
        <position position="91"/>
    </location>
    <ligand>
        <name>Cu(2+)</name>
        <dbReference type="ChEBI" id="CHEBI:29036"/>
        <label>4</label>
    </ligand>
</feature>
<feature type="lipid moiety-binding region" description="GPI-anchor amidated alanine" evidence="5">
    <location>
        <position position="233"/>
    </location>
</feature>
<feature type="glycosylation site" description="N-linked (GlcNAc...) asparagine" evidence="5">
    <location>
        <position position="184"/>
    </location>
</feature>
<feature type="glycosylation site" description="N-linked (GlcNAc...) asparagine" evidence="5">
    <location>
        <position position="200"/>
    </location>
</feature>
<feature type="disulfide bond" evidence="3">
    <location>
        <begin position="182"/>
        <end position="217"/>
    </location>
</feature>
<feature type="turn" evidence="9">
    <location>
        <begin position="126"/>
        <end position="128"/>
    </location>
</feature>
<feature type="helix" evidence="8">
    <location>
        <begin position="147"/>
        <end position="156"/>
    </location>
</feature>
<feature type="helix" evidence="8">
    <location>
        <begin position="157"/>
        <end position="159"/>
    </location>
</feature>
<feature type="helix" evidence="8">
    <location>
        <begin position="169"/>
        <end position="171"/>
    </location>
</feature>
<feature type="strand" evidence="8">
    <location>
        <begin position="172"/>
        <end position="174"/>
    </location>
</feature>
<feature type="helix" evidence="8">
    <location>
        <begin position="175"/>
        <end position="196"/>
    </location>
</feature>
<feature type="helix" evidence="8">
    <location>
        <begin position="203"/>
        <end position="225"/>
    </location>
</feature>
<accession>P47852</accession>
<evidence type="ECO:0000250" key="1"/>
<evidence type="ECO:0000250" key="2">
    <source>
        <dbReference type="UniProtKB" id="P04156"/>
    </source>
</evidence>
<evidence type="ECO:0000250" key="3">
    <source>
        <dbReference type="UniProtKB" id="P04273"/>
    </source>
</evidence>
<evidence type="ECO:0000250" key="4">
    <source>
        <dbReference type="UniProtKB" id="P04925"/>
    </source>
</evidence>
<evidence type="ECO:0000255" key="5"/>
<evidence type="ECO:0000256" key="6">
    <source>
        <dbReference type="SAM" id="MobiDB-lite"/>
    </source>
</evidence>
<evidence type="ECO:0000305" key="7"/>
<evidence type="ECO:0007829" key="8">
    <source>
        <dbReference type="PDB" id="4YXH"/>
    </source>
</evidence>
<evidence type="ECO:0007829" key="9">
    <source>
        <dbReference type="PDB" id="6FNV"/>
    </source>
</evidence>
<reference key="1">
    <citation type="journal article" date="1997" name="Lancet">
        <title>High sequence homology of the PrP gene in mule deer and Rocky Mountain elk.</title>
        <authorList>
            <person name="Cervenakova L."/>
            <person name="Rohwer R."/>
            <person name="Williams S."/>
            <person name="Brown P."/>
            <person name="Gajdusek D.C."/>
        </authorList>
    </citation>
    <scope>NUCLEOTIDE SEQUENCE [GENOMIC DNA]</scope>
</reference>
<gene>
    <name type="primary">PRNP</name>
    <name type="synonym">PRP</name>
</gene>